<sequence length="197" mass="22782">MKKRRSKKERQELLQQTIETNPFITDEDLAEKFQVSIQTVRLDRMELSIPELRERIKHVATKQHEEDVKSLPLEEVVGEIIDIELDRHAISIFEVKVEHVFKRNQIARGHHLFAQANSLAVAVIDEELALTAKSTIRYIRPVKLGERVVAKARVEDVENDKGRTVVKVRSFVGEELVFTGTFEMYRSSNYSEEGNNL</sequence>
<comment type="function">
    <text evidence="1">Transcriptional factor involved in regulation of membrane lipid biosynthesis by repressing genes involved in fatty acid and phospholipid metabolism.</text>
</comment>
<comment type="similarity">
    <text evidence="1">Belongs to the FapR family.</text>
</comment>
<comment type="sequence caution" evidence="2">
    <conflict type="erroneous initiation">
        <sequence resource="EMBL-CDS" id="AAU16658"/>
    </conflict>
</comment>
<organism>
    <name type="scientific">Bacillus cereus (strain ZK / E33L)</name>
    <dbReference type="NCBI Taxonomy" id="288681"/>
    <lineage>
        <taxon>Bacteria</taxon>
        <taxon>Bacillati</taxon>
        <taxon>Bacillota</taxon>
        <taxon>Bacilli</taxon>
        <taxon>Bacillales</taxon>
        <taxon>Bacillaceae</taxon>
        <taxon>Bacillus</taxon>
        <taxon>Bacillus cereus group</taxon>
    </lineage>
</organism>
<name>FAPR_BACCZ</name>
<proteinExistence type="inferred from homology"/>
<feature type="chain" id="PRO_0000172815" description="Transcription factor FapR">
    <location>
        <begin position="1"/>
        <end position="197"/>
    </location>
</feature>
<accession>Q636H2</accession>
<dbReference type="EMBL" id="CP000001">
    <property type="protein sequence ID" value="AAU16658.1"/>
    <property type="status" value="ALT_INIT"/>
    <property type="molecule type" value="Genomic_DNA"/>
</dbReference>
<dbReference type="RefSeq" id="WP_000747352.1">
    <property type="nucleotide sequence ID" value="NZ_CP009968.1"/>
</dbReference>
<dbReference type="SMR" id="Q636H2"/>
<dbReference type="GeneID" id="93007258"/>
<dbReference type="KEGG" id="bcz:BCE33L3613"/>
<dbReference type="PATRIC" id="fig|288681.22.peg.1798"/>
<dbReference type="Proteomes" id="UP000002612">
    <property type="component" value="Chromosome"/>
</dbReference>
<dbReference type="GO" id="GO:0003677">
    <property type="term" value="F:DNA binding"/>
    <property type="evidence" value="ECO:0007669"/>
    <property type="project" value="UniProtKB-KW"/>
</dbReference>
<dbReference type="GO" id="GO:0003700">
    <property type="term" value="F:DNA-binding transcription factor activity"/>
    <property type="evidence" value="ECO:0007669"/>
    <property type="project" value="UniProtKB-UniRule"/>
</dbReference>
<dbReference type="GO" id="GO:0006633">
    <property type="term" value="P:fatty acid biosynthetic process"/>
    <property type="evidence" value="ECO:0007669"/>
    <property type="project" value="UniProtKB-KW"/>
</dbReference>
<dbReference type="GO" id="GO:0045892">
    <property type="term" value="P:negative regulation of DNA-templated transcription"/>
    <property type="evidence" value="ECO:0007669"/>
    <property type="project" value="UniProtKB-UniRule"/>
</dbReference>
<dbReference type="GO" id="GO:0045717">
    <property type="term" value="P:negative regulation of fatty acid biosynthetic process"/>
    <property type="evidence" value="ECO:0007669"/>
    <property type="project" value="UniProtKB-UniRule"/>
</dbReference>
<dbReference type="CDD" id="cd03440">
    <property type="entry name" value="hot_dog"/>
    <property type="match status" value="1"/>
</dbReference>
<dbReference type="Gene3D" id="3.10.129.10">
    <property type="entry name" value="Hotdog Thioesterase"/>
    <property type="match status" value="1"/>
</dbReference>
<dbReference type="Gene3D" id="1.10.10.10">
    <property type="entry name" value="Winged helix-like DNA-binding domain superfamily/Winged helix DNA-binding domain"/>
    <property type="match status" value="1"/>
</dbReference>
<dbReference type="HAMAP" id="MF_01814">
    <property type="entry name" value="Transcrip_fact_FapR"/>
    <property type="match status" value="1"/>
</dbReference>
<dbReference type="InterPro" id="IPR029069">
    <property type="entry name" value="HotDog_dom_sf"/>
</dbReference>
<dbReference type="InterPro" id="IPR006683">
    <property type="entry name" value="Thioestr_dom"/>
</dbReference>
<dbReference type="InterPro" id="IPR017275">
    <property type="entry name" value="Transcription_factor_FapR"/>
</dbReference>
<dbReference type="InterPro" id="IPR036388">
    <property type="entry name" value="WH-like_DNA-bd_sf"/>
</dbReference>
<dbReference type="InterPro" id="IPR036390">
    <property type="entry name" value="WH_DNA-bd_sf"/>
</dbReference>
<dbReference type="NCBIfam" id="NF003359">
    <property type="entry name" value="PRK04424.1"/>
    <property type="match status" value="1"/>
</dbReference>
<dbReference type="Pfam" id="PF03061">
    <property type="entry name" value="4HBT"/>
    <property type="match status" value="1"/>
</dbReference>
<dbReference type="PIRSF" id="PIRSF037733">
    <property type="entry name" value="Transcription_factor_FapR"/>
    <property type="match status" value="1"/>
</dbReference>
<dbReference type="SUPFAM" id="SSF54637">
    <property type="entry name" value="Thioesterase/thiol ester dehydrase-isomerase"/>
    <property type="match status" value="1"/>
</dbReference>
<dbReference type="SUPFAM" id="SSF46785">
    <property type="entry name" value="Winged helix' DNA-binding domain"/>
    <property type="match status" value="1"/>
</dbReference>
<protein>
    <recommendedName>
        <fullName evidence="1">Transcription factor FapR</fullName>
    </recommendedName>
    <alternativeName>
        <fullName evidence="1">Fatty acid and phospholipid biosynthesis regulator</fullName>
    </alternativeName>
</protein>
<keyword id="KW-0238">DNA-binding</keyword>
<keyword id="KW-0275">Fatty acid biosynthesis</keyword>
<keyword id="KW-0276">Fatty acid metabolism</keyword>
<keyword id="KW-0444">Lipid biosynthesis</keyword>
<keyword id="KW-0443">Lipid metabolism</keyword>
<keyword id="KW-0678">Repressor</keyword>
<keyword id="KW-0804">Transcription</keyword>
<keyword id="KW-0805">Transcription regulation</keyword>
<reference key="1">
    <citation type="journal article" date="2006" name="J. Bacteriol.">
        <title>Pathogenomic sequence analysis of Bacillus cereus and Bacillus thuringiensis isolates closely related to Bacillus anthracis.</title>
        <authorList>
            <person name="Han C.S."/>
            <person name="Xie G."/>
            <person name="Challacombe J.F."/>
            <person name="Altherr M.R."/>
            <person name="Bhotika S.S."/>
            <person name="Bruce D."/>
            <person name="Campbell C.S."/>
            <person name="Campbell M.L."/>
            <person name="Chen J."/>
            <person name="Chertkov O."/>
            <person name="Cleland C."/>
            <person name="Dimitrijevic M."/>
            <person name="Doggett N.A."/>
            <person name="Fawcett J.J."/>
            <person name="Glavina T."/>
            <person name="Goodwin L.A."/>
            <person name="Hill K.K."/>
            <person name="Hitchcock P."/>
            <person name="Jackson P.J."/>
            <person name="Keim P."/>
            <person name="Kewalramani A.R."/>
            <person name="Longmire J."/>
            <person name="Lucas S."/>
            <person name="Malfatti S."/>
            <person name="McMurry K."/>
            <person name="Meincke L.J."/>
            <person name="Misra M."/>
            <person name="Moseman B.L."/>
            <person name="Mundt M."/>
            <person name="Munk A.C."/>
            <person name="Okinaka R.T."/>
            <person name="Parson-Quintana B."/>
            <person name="Reilly L.P."/>
            <person name="Richardson P."/>
            <person name="Robinson D.L."/>
            <person name="Rubin E."/>
            <person name="Saunders E."/>
            <person name="Tapia R."/>
            <person name="Tesmer J.G."/>
            <person name="Thayer N."/>
            <person name="Thompson L.S."/>
            <person name="Tice H."/>
            <person name="Ticknor L.O."/>
            <person name="Wills P.L."/>
            <person name="Brettin T.S."/>
            <person name="Gilna P."/>
        </authorList>
    </citation>
    <scope>NUCLEOTIDE SEQUENCE [LARGE SCALE GENOMIC DNA]</scope>
    <source>
        <strain>ZK / E33L</strain>
    </source>
</reference>
<gene>
    <name evidence="1" type="primary">fapR</name>
    <name type="ordered locus">BCE33L3613</name>
</gene>
<evidence type="ECO:0000255" key="1">
    <source>
        <dbReference type="HAMAP-Rule" id="MF_01814"/>
    </source>
</evidence>
<evidence type="ECO:0000305" key="2"/>